<feature type="chain" id="PRO_0000417625" description="Snake venom metalloproteinase crotalin">
    <location>
        <begin position="1" status="less than"/>
        <end position="43"/>
    </location>
</feature>
<feature type="domain" description="Peptidase M12B" evidence="2">
    <location>
        <begin position="1" status="less than"/>
        <end position="43"/>
    </location>
</feature>
<feature type="binding site" evidence="2 3">
    <location>
        <position position="13"/>
    </location>
    <ligand>
        <name>Zn(2+)</name>
        <dbReference type="ChEBI" id="CHEBI:29105"/>
        <note>catalytic</note>
    </ligand>
</feature>
<feature type="disulfide bond" evidence="2">
    <location>
        <begin position="18"/>
        <end status="unknown"/>
    </location>
</feature>
<feature type="disulfide bond" evidence="2">
    <location>
        <begin position="38"/>
        <end status="unknown"/>
    </location>
</feature>
<feature type="non-consecutive residues" evidence="6">
    <location>
        <begin position="11"/>
        <end position="12"/>
    </location>
</feature>
<feature type="non-consecutive residues" evidence="6">
    <location>
        <begin position="24"/>
        <end position="25"/>
    </location>
</feature>
<feature type="non-terminal residue">
    <location>
        <position position="1"/>
    </location>
</feature>
<reference key="1">
    <citation type="journal article" date="2001" name="Thromb. Haemost.">
        <title>Crotalin, a vWF and GP Ib cleaving metalloproteinase from venom of Crotalus atrox.</title>
        <authorList>
            <person name="Wu W.-B."/>
            <person name="Peng H.-C."/>
            <person name="Huang T.-F."/>
        </authorList>
    </citation>
    <scope>PROTEIN SEQUENCE</scope>
    <scope>FUNCTION</scope>
    <source>
        <tissue>Venom</tissue>
    </source>
</reference>
<reference key="2">
    <citation type="journal article" date="1998" name="Blood">
        <title>Antithrombotic effect of crotalin, a platelet membrane glycoprotein Ib antagonist from venom of Crotalus atrox.</title>
        <authorList>
            <person name="Chang M.-C."/>
            <person name="Lin H.-K."/>
            <person name="Peng H.-C."/>
            <person name="Huang T.-F."/>
        </authorList>
    </citation>
    <scope>FUNCTION</scope>
    <source>
        <tissue>Venom</tissue>
    </source>
</reference>
<accession>P0DJ42</accession>
<sequence length="43" mass="5015">LLRRKSHDHAQNHDGDKCLRGASLGYYQSFLNQYKPQCILNKP</sequence>
<keyword id="KW-0903">Direct protein sequencing</keyword>
<keyword id="KW-1015">Disulfide bond</keyword>
<keyword id="KW-1206">Fibrinogenolytic toxin</keyword>
<keyword id="KW-1200">Hemorrhagic toxin</keyword>
<keyword id="KW-1199">Hemostasis impairing toxin</keyword>
<keyword id="KW-0378">Hydrolase</keyword>
<keyword id="KW-0479">Metal-binding</keyword>
<keyword id="KW-0482">Metalloprotease</keyword>
<keyword id="KW-1201">Platelet aggregation inhibiting toxin</keyword>
<keyword id="KW-0645">Protease</keyword>
<keyword id="KW-0964">Secreted</keyword>
<keyword id="KW-0800">Toxin</keyword>
<keyword id="KW-0862">Zinc</keyword>
<name>VM1CR_CROAT</name>
<dbReference type="EC" id="3.4.24.-"/>
<dbReference type="SMR" id="P0DJ42"/>
<dbReference type="GO" id="GO:0005576">
    <property type="term" value="C:extracellular region"/>
    <property type="evidence" value="ECO:0007669"/>
    <property type="project" value="UniProtKB-SubCell"/>
</dbReference>
<dbReference type="GO" id="GO:0043655">
    <property type="term" value="C:host extracellular space"/>
    <property type="evidence" value="ECO:0000303"/>
    <property type="project" value="UniProtKB"/>
</dbReference>
<dbReference type="GO" id="GO:0046872">
    <property type="term" value="F:metal ion binding"/>
    <property type="evidence" value="ECO:0007669"/>
    <property type="project" value="UniProtKB-KW"/>
</dbReference>
<dbReference type="GO" id="GO:0004222">
    <property type="term" value="F:metalloendopeptidase activity"/>
    <property type="evidence" value="ECO:0000314"/>
    <property type="project" value="UniProtKB"/>
</dbReference>
<dbReference type="GO" id="GO:0090729">
    <property type="term" value="F:toxin activity"/>
    <property type="evidence" value="ECO:0007669"/>
    <property type="project" value="UniProtKB-KW"/>
</dbReference>
<dbReference type="GO" id="GO:0006508">
    <property type="term" value="P:proteolysis"/>
    <property type="evidence" value="ECO:0007669"/>
    <property type="project" value="UniProtKB-KW"/>
</dbReference>
<dbReference type="GO" id="GO:0044485">
    <property type="term" value="P:venom-mediated fibrinogenolysis in another organism"/>
    <property type="evidence" value="ECO:0000314"/>
    <property type="project" value="UniProtKB"/>
</dbReference>
<dbReference type="GO" id="GO:0044358">
    <property type="term" value="P:venom-mediated hemorrhage in another organism"/>
    <property type="evidence" value="ECO:0000314"/>
    <property type="project" value="UniProtKB"/>
</dbReference>
<dbReference type="GO" id="GO:0044477">
    <property type="term" value="P:venom-mediated suppression of platelet aggregation"/>
    <property type="evidence" value="ECO:0000314"/>
    <property type="project" value="UniProtKB"/>
</dbReference>
<protein>
    <recommendedName>
        <fullName>Snake venom metalloproteinase crotalin</fullName>
        <shortName>SVMP</shortName>
        <ecNumber>3.4.24.-</ecNumber>
    </recommendedName>
</protein>
<comment type="function">
    <text evidence="4 5">Snake venom zinc metalloproteinase that inhibits ristocin-induced platelet aggregation by abolishing the binding of von Willebrand factor (vWF) to platelet glycoprotein Ib alpha (GPIBA) through the cleavage of both GP1BA and vWF. Also has fibrinogenolytic activities by degrading the alpha- (FGA) and beta-chain (FGB) of fibrinogen. In vivo, induces a slight hemorrhage when applied to chick chorioallantoic membrane and has potent antithrombic effect.</text>
</comment>
<comment type="cofactor">
    <cofactor evidence="1">
        <name>Zn(2+)</name>
        <dbReference type="ChEBI" id="CHEBI:29105"/>
    </cofactor>
    <text evidence="1">Binds 1 zinc ion per subunit.</text>
</comment>
<comment type="subunit">
    <text evidence="1">Monomer.</text>
</comment>
<comment type="subcellular location">
    <subcellularLocation>
        <location>Secreted</location>
    </subcellularLocation>
</comment>
<comment type="tissue specificity">
    <text>Expressed by the venom gland.</text>
</comment>
<comment type="PTM">
    <text>This protein autoproteolytically degrades to 10 kDa and 14 kDa fragments in the presence of SDS. Interestingly, the two fragments, as well as reduced crotalin are able to bind vWF, indicating that the binding activity does not require a specific protein conformation.</text>
</comment>
<comment type="miscellaneous">
    <text evidence="7">Negative results: does not induce thrombocytopenia after injection into mice.</text>
</comment>
<comment type="similarity">
    <text evidence="6">Belongs to the venom metalloproteinase (M12B) family. P-I subfamily.</text>
</comment>
<comment type="caution">
    <text evidence="6">This fragmental protein is 100% identical to atrolysin-B (AC Q90391) and may be the same protein.</text>
</comment>
<organism>
    <name type="scientific">Crotalus atrox</name>
    <name type="common">Western diamondback rattlesnake</name>
    <dbReference type="NCBI Taxonomy" id="8730"/>
    <lineage>
        <taxon>Eukaryota</taxon>
        <taxon>Metazoa</taxon>
        <taxon>Chordata</taxon>
        <taxon>Craniata</taxon>
        <taxon>Vertebrata</taxon>
        <taxon>Euteleostomi</taxon>
        <taxon>Lepidosauria</taxon>
        <taxon>Squamata</taxon>
        <taxon>Bifurcata</taxon>
        <taxon>Unidentata</taxon>
        <taxon>Episquamata</taxon>
        <taxon>Toxicofera</taxon>
        <taxon>Serpentes</taxon>
        <taxon>Colubroidea</taxon>
        <taxon>Viperidae</taxon>
        <taxon>Crotalinae</taxon>
        <taxon>Crotalus</taxon>
    </lineage>
</organism>
<evidence type="ECO:0000250" key="1"/>
<evidence type="ECO:0000255" key="2">
    <source>
        <dbReference type="PROSITE-ProRule" id="PRU00276"/>
    </source>
</evidence>
<evidence type="ECO:0000255" key="3">
    <source>
        <dbReference type="PROSITE-ProRule" id="PRU10095"/>
    </source>
</evidence>
<evidence type="ECO:0000269" key="4">
    <source>
    </source>
</evidence>
<evidence type="ECO:0000269" key="5">
    <source>
    </source>
</evidence>
<evidence type="ECO:0000305" key="6"/>
<evidence type="ECO:0000305" key="7">
    <source>
    </source>
</evidence>
<proteinExistence type="evidence at protein level"/>